<organism>
    <name type="scientific">Staphylococcus saprophyticus subsp. saprophyticus (strain ATCC 15305 / DSM 20229 / NCIMB 8711 / NCTC 7292 / S-41)</name>
    <dbReference type="NCBI Taxonomy" id="342451"/>
    <lineage>
        <taxon>Bacteria</taxon>
        <taxon>Bacillati</taxon>
        <taxon>Bacillota</taxon>
        <taxon>Bacilli</taxon>
        <taxon>Bacillales</taxon>
        <taxon>Staphylococcaceae</taxon>
        <taxon>Staphylococcus</taxon>
    </lineage>
</organism>
<feature type="chain" id="PRO_1000012684" description="ATP-dependent protease subunit HslV">
    <location>
        <begin position="1"/>
        <end position="180"/>
    </location>
</feature>
<feature type="active site" evidence="1">
    <location>
        <position position="8"/>
    </location>
</feature>
<feature type="binding site" evidence="1">
    <location>
        <position position="165"/>
    </location>
    <ligand>
        <name>Na(+)</name>
        <dbReference type="ChEBI" id="CHEBI:29101"/>
    </ligand>
</feature>
<feature type="binding site" evidence="1">
    <location>
        <position position="168"/>
    </location>
    <ligand>
        <name>Na(+)</name>
        <dbReference type="ChEBI" id="CHEBI:29101"/>
    </ligand>
</feature>
<feature type="binding site" evidence="1">
    <location>
        <position position="171"/>
    </location>
    <ligand>
        <name>Na(+)</name>
        <dbReference type="ChEBI" id="CHEBI:29101"/>
    </ligand>
</feature>
<sequence length="180" mass="19517">MSTSIHATTIFAVQHNGHAAMAGDGQVTLGEQVIMKQTARKVRRLYNDKVLAGFAGSVADAFTLFEKFETKLQQFSGNLERAAVELAQEWRGDKQLRQLEAMLIVMDETSILVVSGTGEVIVPDDNLIAIGSGGNYALSAGRALKRNATHLSASEMAYESLKVASDICVFTNDRIIVENL</sequence>
<reference key="1">
    <citation type="journal article" date="2005" name="Proc. Natl. Acad. Sci. U.S.A.">
        <title>Whole genome sequence of Staphylococcus saprophyticus reveals the pathogenesis of uncomplicated urinary tract infection.</title>
        <authorList>
            <person name="Kuroda M."/>
            <person name="Yamashita A."/>
            <person name="Hirakawa H."/>
            <person name="Kumano M."/>
            <person name="Morikawa K."/>
            <person name="Higashide M."/>
            <person name="Maruyama A."/>
            <person name="Inose Y."/>
            <person name="Matoba K."/>
            <person name="Toh H."/>
            <person name="Kuhara S."/>
            <person name="Hattori M."/>
            <person name="Ohta T."/>
        </authorList>
    </citation>
    <scope>NUCLEOTIDE SEQUENCE [LARGE SCALE GENOMIC DNA]</scope>
    <source>
        <strain>ATCC 15305 / DSM 20229 / NCIMB 8711 / NCTC 7292 / S-41</strain>
    </source>
</reference>
<name>HSLV_STAS1</name>
<accession>Q49X38</accession>
<dbReference type="EC" id="3.4.25.2" evidence="1"/>
<dbReference type="EMBL" id="AP008934">
    <property type="protein sequence ID" value="BAE18660.1"/>
    <property type="molecule type" value="Genomic_DNA"/>
</dbReference>
<dbReference type="RefSeq" id="WP_011303265.1">
    <property type="nucleotide sequence ID" value="NC_007350.1"/>
</dbReference>
<dbReference type="SMR" id="Q49X38"/>
<dbReference type="MEROPS" id="T01.007"/>
<dbReference type="GeneID" id="3617257"/>
<dbReference type="KEGG" id="ssp:SSP1515"/>
<dbReference type="PATRIC" id="fig|342451.11.peg.1517"/>
<dbReference type="eggNOG" id="COG5405">
    <property type="taxonomic scope" value="Bacteria"/>
</dbReference>
<dbReference type="HOGENOM" id="CLU_093872_1_1_9"/>
<dbReference type="OrthoDB" id="9804884at2"/>
<dbReference type="Proteomes" id="UP000006371">
    <property type="component" value="Chromosome"/>
</dbReference>
<dbReference type="GO" id="GO:0009376">
    <property type="term" value="C:HslUV protease complex"/>
    <property type="evidence" value="ECO:0007669"/>
    <property type="project" value="UniProtKB-UniRule"/>
</dbReference>
<dbReference type="GO" id="GO:0005839">
    <property type="term" value="C:proteasome core complex"/>
    <property type="evidence" value="ECO:0007669"/>
    <property type="project" value="InterPro"/>
</dbReference>
<dbReference type="GO" id="GO:0046872">
    <property type="term" value="F:metal ion binding"/>
    <property type="evidence" value="ECO:0007669"/>
    <property type="project" value="UniProtKB-KW"/>
</dbReference>
<dbReference type="GO" id="GO:0004298">
    <property type="term" value="F:threonine-type endopeptidase activity"/>
    <property type="evidence" value="ECO:0007669"/>
    <property type="project" value="UniProtKB-KW"/>
</dbReference>
<dbReference type="GO" id="GO:0051603">
    <property type="term" value="P:proteolysis involved in protein catabolic process"/>
    <property type="evidence" value="ECO:0007669"/>
    <property type="project" value="InterPro"/>
</dbReference>
<dbReference type="CDD" id="cd01913">
    <property type="entry name" value="protease_HslV"/>
    <property type="match status" value="1"/>
</dbReference>
<dbReference type="Gene3D" id="3.60.20.10">
    <property type="entry name" value="Glutamine Phosphoribosylpyrophosphate, subunit 1, domain 1"/>
    <property type="match status" value="1"/>
</dbReference>
<dbReference type="HAMAP" id="MF_00248">
    <property type="entry name" value="HslV"/>
    <property type="match status" value="1"/>
</dbReference>
<dbReference type="InterPro" id="IPR022281">
    <property type="entry name" value="ATP-dep_Prtase_HsIV_su"/>
</dbReference>
<dbReference type="InterPro" id="IPR029055">
    <property type="entry name" value="Ntn_hydrolases_N"/>
</dbReference>
<dbReference type="InterPro" id="IPR001353">
    <property type="entry name" value="Proteasome_sua/b"/>
</dbReference>
<dbReference type="InterPro" id="IPR023333">
    <property type="entry name" value="Proteasome_suB-type"/>
</dbReference>
<dbReference type="NCBIfam" id="TIGR03692">
    <property type="entry name" value="ATP_dep_HslV"/>
    <property type="match status" value="1"/>
</dbReference>
<dbReference type="NCBIfam" id="NF003964">
    <property type="entry name" value="PRK05456.1"/>
    <property type="match status" value="1"/>
</dbReference>
<dbReference type="PANTHER" id="PTHR32194:SF0">
    <property type="entry name" value="ATP-DEPENDENT PROTEASE SUBUNIT HSLV"/>
    <property type="match status" value="1"/>
</dbReference>
<dbReference type="PANTHER" id="PTHR32194">
    <property type="entry name" value="METALLOPROTEASE TLDD"/>
    <property type="match status" value="1"/>
</dbReference>
<dbReference type="Pfam" id="PF00227">
    <property type="entry name" value="Proteasome"/>
    <property type="match status" value="1"/>
</dbReference>
<dbReference type="PIRSF" id="PIRSF039093">
    <property type="entry name" value="HslV"/>
    <property type="match status" value="1"/>
</dbReference>
<dbReference type="SUPFAM" id="SSF56235">
    <property type="entry name" value="N-terminal nucleophile aminohydrolases (Ntn hydrolases)"/>
    <property type="match status" value="1"/>
</dbReference>
<dbReference type="PROSITE" id="PS51476">
    <property type="entry name" value="PROTEASOME_BETA_2"/>
    <property type="match status" value="1"/>
</dbReference>
<keyword id="KW-0021">Allosteric enzyme</keyword>
<keyword id="KW-0963">Cytoplasm</keyword>
<keyword id="KW-0378">Hydrolase</keyword>
<keyword id="KW-0479">Metal-binding</keyword>
<keyword id="KW-0645">Protease</keyword>
<keyword id="KW-1185">Reference proteome</keyword>
<keyword id="KW-0915">Sodium</keyword>
<keyword id="KW-0888">Threonine protease</keyword>
<proteinExistence type="inferred from homology"/>
<evidence type="ECO:0000255" key="1">
    <source>
        <dbReference type="HAMAP-Rule" id="MF_00248"/>
    </source>
</evidence>
<gene>
    <name evidence="1" type="primary">hslV</name>
    <name type="ordered locus">SSP1515</name>
</gene>
<protein>
    <recommendedName>
        <fullName evidence="1">ATP-dependent protease subunit HslV</fullName>
        <ecNumber evidence="1">3.4.25.2</ecNumber>
    </recommendedName>
</protein>
<comment type="function">
    <text evidence="1">Protease subunit of a proteasome-like degradation complex believed to be a general protein degrading machinery.</text>
</comment>
<comment type="catalytic activity">
    <reaction evidence="1">
        <text>ATP-dependent cleavage of peptide bonds with broad specificity.</text>
        <dbReference type="EC" id="3.4.25.2"/>
    </reaction>
</comment>
<comment type="activity regulation">
    <text evidence="1">Allosterically activated by HslU binding.</text>
</comment>
<comment type="subunit">
    <text evidence="1">A double ring-shaped homohexamer of HslV is capped on each side by a ring-shaped HslU homohexamer. The assembly of the HslU/HslV complex is dependent on binding of ATP.</text>
</comment>
<comment type="subcellular location">
    <subcellularLocation>
        <location evidence="1">Cytoplasm</location>
    </subcellularLocation>
</comment>
<comment type="similarity">
    <text evidence="1">Belongs to the peptidase T1B family. HslV subfamily.</text>
</comment>